<comment type="function">
    <text evidence="1">RNaseP catalyzes the removal of the 5'-leader sequence from pre-tRNA to produce the mature 5'-terminus. It can also cleave other RNA substrates such as 4.5S RNA. The protein component plays an auxiliary but essential role in vivo by binding to the 5'-leader sequence and broadening the substrate specificity of the ribozyme.</text>
</comment>
<comment type="catalytic activity">
    <reaction evidence="1">
        <text>Endonucleolytic cleavage of RNA, removing 5'-extranucleotides from tRNA precursor.</text>
        <dbReference type="EC" id="3.1.26.5"/>
    </reaction>
</comment>
<comment type="subunit">
    <text evidence="1">Consists of a catalytic RNA component (M1 or rnpB) and a protein subunit.</text>
</comment>
<comment type="similarity">
    <text evidence="1">Belongs to the RnpA family.</text>
</comment>
<organism>
    <name type="scientific">Bacillus anthracis</name>
    <dbReference type="NCBI Taxonomy" id="1392"/>
    <lineage>
        <taxon>Bacteria</taxon>
        <taxon>Bacillati</taxon>
        <taxon>Bacillota</taxon>
        <taxon>Bacilli</taxon>
        <taxon>Bacillales</taxon>
        <taxon>Bacillaceae</taxon>
        <taxon>Bacillus</taxon>
        <taxon>Bacillus cereus group</taxon>
    </lineage>
</organism>
<feature type="chain" id="PRO_0000198417" description="Ribonuclease P protein component">
    <location>
        <begin position="1"/>
        <end position="119"/>
    </location>
</feature>
<gene>
    <name evidence="1" type="primary">rnpA</name>
    <name type="ordered locus">BA_5737</name>
    <name type="ordered locus">GBAA_5737</name>
    <name type="ordered locus">BAS5340</name>
</gene>
<proteinExistence type="inferred from homology"/>
<dbReference type="EC" id="3.1.26.5" evidence="1"/>
<dbReference type="EMBL" id="AE016879">
    <property type="protein sequence ID" value="AAP29368.1"/>
    <property type="molecule type" value="Genomic_DNA"/>
</dbReference>
<dbReference type="EMBL" id="AE017334">
    <property type="protein sequence ID" value="AAT34898.1"/>
    <property type="molecule type" value="Genomic_DNA"/>
</dbReference>
<dbReference type="EMBL" id="AE017225">
    <property type="protein sequence ID" value="AAT57627.1"/>
    <property type="molecule type" value="Genomic_DNA"/>
</dbReference>
<dbReference type="RefSeq" id="NP_847882.1">
    <property type="nucleotide sequence ID" value="NC_003997.3"/>
</dbReference>
<dbReference type="RefSeq" id="WP_000726628.1">
    <property type="nucleotide sequence ID" value="NZ_WXXJ01000028.1"/>
</dbReference>
<dbReference type="RefSeq" id="YP_031577.1">
    <property type="nucleotide sequence ID" value="NC_005945.1"/>
</dbReference>
<dbReference type="SMR" id="Q81JH0"/>
<dbReference type="STRING" id="261594.GBAA_5737"/>
<dbReference type="DNASU" id="1085509"/>
<dbReference type="GeneID" id="45025315"/>
<dbReference type="KEGG" id="ban:BA_5737"/>
<dbReference type="KEGG" id="bar:GBAA_5737"/>
<dbReference type="KEGG" id="bat:BAS5340"/>
<dbReference type="PATRIC" id="fig|198094.11.peg.5698"/>
<dbReference type="eggNOG" id="COG0594">
    <property type="taxonomic scope" value="Bacteria"/>
</dbReference>
<dbReference type="HOGENOM" id="CLU_117179_9_1_9"/>
<dbReference type="OMA" id="PEQKHFR"/>
<dbReference type="OrthoDB" id="9810867at2"/>
<dbReference type="Proteomes" id="UP000000427">
    <property type="component" value="Chromosome"/>
</dbReference>
<dbReference type="Proteomes" id="UP000000594">
    <property type="component" value="Chromosome"/>
</dbReference>
<dbReference type="GO" id="GO:0030677">
    <property type="term" value="C:ribonuclease P complex"/>
    <property type="evidence" value="ECO:0007669"/>
    <property type="project" value="TreeGrafter"/>
</dbReference>
<dbReference type="GO" id="GO:0042781">
    <property type="term" value="F:3'-tRNA processing endoribonuclease activity"/>
    <property type="evidence" value="ECO:0007669"/>
    <property type="project" value="TreeGrafter"/>
</dbReference>
<dbReference type="GO" id="GO:0004526">
    <property type="term" value="F:ribonuclease P activity"/>
    <property type="evidence" value="ECO:0007669"/>
    <property type="project" value="UniProtKB-UniRule"/>
</dbReference>
<dbReference type="GO" id="GO:0000049">
    <property type="term" value="F:tRNA binding"/>
    <property type="evidence" value="ECO:0007669"/>
    <property type="project" value="UniProtKB-UniRule"/>
</dbReference>
<dbReference type="GO" id="GO:0001682">
    <property type="term" value="P:tRNA 5'-leader removal"/>
    <property type="evidence" value="ECO:0007669"/>
    <property type="project" value="UniProtKB-UniRule"/>
</dbReference>
<dbReference type="FunFam" id="3.30.230.10:FF:000021">
    <property type="entry name" value="Ribonuclease P protein component"/>
    <property type="match status" value="1"/>
</dbReference>
<dbReference type="Gene3D" id="3.30.230.10">
    <property type="match status" value="1"/>
</dbReference>
<dbReference type="HAMAP" id="MF_00227">
    <property type="entry name" value="RNase_P"/>
    <property type="match status" value="1"/>
</dbReference>
<dbReference type="InterPro" id="IPR020568">
    <property type="entry name" value="Ribosomal_Su5_D2-typ_SF"/>
</dbReference>
<dbReference type="InterPro" id="IPR014721">
    <property type="entry name" value="Ribsml_uS5_D2-typ_fold_subgr"/>
</dbReference>
<dbReference type="InterPro" id="IPR000100">
    <property type="entry name" value="RNase_P"/>
</dbReference>
<dbReference type="InterPro" id="IPR020539">
    <property type="entry name" value="RNase_P_CS"/>
</dbReference>
<dbReference type="NCBIfam" id="TIGR00188">
    <property type="entry name" value="rnpA"/>
    <property type="match status" value="1"/>
</dbReference>
<dbReference type="PANTHER" id="PTHR33992">
    <property type="entry name" value="RIBONUCLEASE P PROTEIN COMPONENT"/>
    <property type="match status" value="1"/>
</dbReference>
<dbReference type="PANTHER" id="PTHR33992:SF1">
    <property type="entry name" value="RIBONUCLEASE P PROTEIN COMPONENT"/>
    <property type="match status" value="1"/>
</dbReference>
<dbReference type="Pfam" id="PF00825">
    <property type="entry name" value="Ribonuclease_P"/>
    <property type="match status" value="1"/>
</dbReference>
<dbReference type="SUPFAM" id="SSF54211">
    <property type="entry name" value="Ribosomal protein S5 domain 2-like"/>
    <property type="match status" value="1"/>
</dbReference>
<dbReference type="PROSITE" id="PS00648">
    <property type="entry name" value="RIBONUCLEASE_P"/>
    <property type="match status" value="1"/>
</dbReference>
<reference key="1">
    <citation type="journal article" date="2003" name="Nature">
        <title>The genome sequence of Bacillus anthracis Ames and comparison to closely related bacteria.</title>
        <authorList>
            <person name="Read T.D."/>
            <person name="Peterson S.N."/>
            <person name="Tourasse N.J."/>
            <person name="Baillie L.W."/>
            <person name="Paulsen I.T."/>
            <person name="Nelson K.E."/>
            <person name="Tettelin H."/>
            <person name="Fouts D.E."/>
            <person name="Eisen J.A."/>
            <person name="Gill S.R."/>
            <person name="Holtzapple E.K."/>
            <person name="Okstad O.A."/>
            <person name="Helgason E."/>
            <person name="Rilstone J."/>
            <person name="Wu M."/>
            <person name="Kolonay J.F."/>
            <person name="Beanan M.J."/>
            <person name="Dodson R.J."/>
            <person name="Brinkac L.M."/>
            <person name="Gwinn M.L."/>
            <person name="DeBoy R.T."/>
            <person name="Madpu R."/>
            <person name="Daugherty S.C."/>
            <person name="Durkin A.S."/>
            <person name="Haft D.H."/>
            <person name="Nelson W.C."/>
            <person name="Peterson J.D."/>
            <person name="Pop M."/>
            <person name="Khouri H.M."/>
            <person name="Radune D."/>
            <person name="Benton J.L."/>
            <person name="Mahamoud Y."/>
            <person name="Jiang L."/>
            <person name="Hance I.R."/>
            <person name="Weidman J.F."/>
            <person name="Berry K.J."/>
            <person name="Plaut R.D."/>
            <person name="Wolf A.M."/>
            <person name="Watkins K.L."/>
            <person name="Nierman W.C."/>
            <person name="Hazen A."/>
            <person name="Cline R.T."/>
            <person name="Redmond C."/>
            <person name="Thwaite J.E."/>
            <person name="White O."/>
            <person name="Salzberg S.L."/>
            <person name="Thomason B."/>
            <person name="Friedlander A.M."/>
            <person name="Koehler T.M."/>
            <person name="Hanna P.C."/>
            <person name="Kolstoe A.-B."/>
            <person name="Fraser C.M."/>
        </authorList>
    </citation>
    <scope>NUCLEOTIDE SEQUENCE [LARGE SCALE GENOMIC DNA]</scope>
    <source>
        <strain>Ames / isolate Porton</strain>
    </source>
</reference>
<reference key="2">
    <citation type="journal article" date="2009" name="J. Bacteriol.">
        <title>The complete genome sequence of Bacillus anthracis Ames 'Ancestor'.</title>
        <authorList>
            <person name="Ravel J."/>
            <person name="Jiang L."/>
            <person name="Stanley S.T."/>
            <person name="Wilson M.R."/>
            <person name="Decker R.S."/>
            <person name="Read T.D."/>
            <person name="Worsham P."/>
            <person name="Keim P.S."/>
            <person name="Salzberg S.L."/>
            <person name="Fraser-Liggett C.M."/>
            <person name="Rasko D.A."/>
        </authorList>
    </citation>
    <scope>NUCLEOTIDE SEQUENCE [LARGE SCALE GENOMIC DNA]</scope>
    <source>
        <strain>Ames ancestor</strain>
    </source>
</reference>
<reference key="3">
    <citation type="submission" date="2004-01" db="EMBL/GenBank/DDBJ databases">
        <title>Complete genome sequence of Bacillus anthracis Sterne.</title>
        <authorList>
            <person name="Brettin T.S."/>
            <person name="Bruce D."/>
            <person name="Challacombe J.F."/>
            <person name="Gilna P."/>
            <person name="Han C."/>
            <person name="Hill K."/>
            <person name="Hitchcock P."/>
            <person name="Jackson P."/>
            <person name="Keim P."/>
            <person name="Longmire J."/>
            <person name="Lucas S."/>
            <person name="Okinaka R."/>
            <person name="Richardson P."/>
            <person name="Rubin E."/>
            <person name="Tice H."/>
        </authorList>
    </citation>
    <scope>NUCLEOTIDE SEQUENCE [LARGE SCALE GENOMIC DNA]</scope>
    <source>
        <strain>Sterne</strain>
    </source>
</reference>
<accession>Q81JH0</accession>
<accession>Q6HQ11</accession>
<accession>Q6KJF6</accession>
<sequence>MKKKHRIKKNDEFQTVFQKGKSNANRQFVVYQLDKEEQPNFRIGLSVSKKIGNAVVRNRIKRMIRQSITELKDEIDSGKDFVIIARKPCAEMTYEELKKSLIHVFKRSGMKRIKSSVRK</sequence>
<evidence type="ECO:0000255" key="1">
    <source>
        <dbReference type="HAMAP-Rule" id="MF_00227"/>
    </source>
</evidence>
<name>RNPA_BACAN</name>
<protein>
    <recommendedName>
        <fullName evidence="1">Ribonuclease P protein component</fullName>
        <shortName evidence="1">RNase P protein</shortName>
        <shortName evidence="1">RNaseP protein</shortName>
        <ecNumber evidence="1">3.1.26.5</ecNumber>
    </recommendedName>
    <alternativeName>
        <fullName evidence="1">Protein C5</fullName>
    </alternativeName>
</protein>
<keyword id="KW-0255">Endonuclease</keyword>
<keyword id="KW-0378">Hydrolase</keyword>
<keyword id="KW-0540">Nuclease</keyword>
<keyword id="KW-1185">Reference proteome</keyword>
<keyword id="KW-0694">RNA-binding</keyword>
<keyword id="KW-0819">tRNA processing</keyword>